<evidence type="ECO:0000250" key="1"/>
<evidence type="ECO:0000255" key="2">
    <source>
        <dbReference type="HAMAP-Rule" id="MF_01109"/>
    </source>
</evidence>
<reference key="1">
    <citation type="journal article" date="2006" name="Proc. Natl. Acad. Sci. U.S.A.">
        <title>Comparative genomics of the lactic acid bacteria.</title>
        <authorList>
            <person name="Makarova K.S."/>
            <person name="Slesarev A."/>
            <person name="Wolf Y.I."/>
            <person name="Sorokin A."/>
            <person name="Mirkin B."/>
            <person name="Koonin E.V."/>
            <person name="Pavlov A."/>
            <person name="Pavlova N."/>
            <person name="Karamychev V."/>
            <person name="Polouchine N."/>
            <person name="Shakhova V."/>
            <person name="Grigoriev I."/>
            <person name="Lou Y."/>
            <person name="Rohksar D."/>
            <person name="Lucas S."/>
            <person name="Huang K."/>
            <person name="Goodstein D.M."/>
            <person name="Hawkins T."/>
            <person name="Plengvidhya V."/>
            <person name="Welker D."/>
            <person name="Hughes J."/>
            <person name="Goh Y."/>
            <person name="Benson A."/>
            <person name="Baldwin K."/>
            <person name="Lee J.-H."/>
            <person name="Diaz-Muniz I."/>
            <person name="Dosti B."/>
            <person name="Smeianov V."/>
            <person name="Wechter W."/>
            <person name="Barabote R."/>
            <person name="Lorca G."/>
            <person name="Altermann E."/>
            <person name="Barrangou R."/>
            <person name="Ganesan B."/>
            <person name="Xie Y."/>
            <person name="Rawsthorne H."/>
            <person name="Tamir D."/>
            <person name="Parker C."/>
            <person name="Breidt F."/>
            <person name="Broadbent J.R."/>
            <person name="Hutkins R."/>
            <person name="O'Sullivan D."/>
            <person name="Steele J."/>
            <person name="Unlu G."/>
            <person name="Saier M.H. Jr."/>
            <person name="Klaenhammer T."/>
            <person name="Richardson P."/>
            <person name="Kozyavkin S."/>
            <person name="Weimer B.C."/>
            <person name="Mills D.A."/>
        </authorList>
    </citation>
    <scope>NUCLEOTIDE SEQUENCE [LARGE SCALE GENOMIC DNA]</scope>
    <source>
        <strain>ATCC 367 / BCRC 12310 / CIP 105137 / JCM 1170 / LMG 11437 / NCIMB 947 / NCTC 947</strain>
    </source>
</reference>
<feature type="chain" id="PRO_1000213569" description="Ornithine carbamoyltransferase">
    <location>
        <begin position="1"/>
        <end position="343"/>
    </location>
</feature>
<feature type="binding site" evidence="2">
    <location>
        <begin position="62"/>
        <end position="65"/>
    </location>
    <ligand>
        <name>carbamoyl phosphate</name>
        <dbReference type="ChEBI" id="CHEBI:58228"/>
    </ligand>
</feature>
<feature type="binding site" evidence="2">
    <location>
        <position position="89"/>
    </location>
    <ligand>
        <name>carbamoyl phosphate</name>
        <dbReference type="ChEBI" id="CHEBI:58228"/>
    </ligand>
</feature>
<feature type="binding site" evidence="2">
    <location>
        <position position="113"/>
    </location>
    <ligand>
        <name>carbamoyl phosphate</name>
        <dbReference type="ChEBI" id="CHEBI:58228"/>
    </ligand>
</feature>
<feature type="binding site" evidence="2">
    <location>
        <begin position="140"/>
        <end position="143"/>
    </location>
    <ligand>
        <name>carbamoyl phosphate</name>
        <dbReference type="ChEBI" id="CHEBI:58228"/>
    </ligand>
</feature>
<feature type="binding site" evidence="2">
    <location>
        <position position="172"/>
    </location>
    <ligand>
        <name>L-ornithine</name>
        <dbReference type="ChEBI" id="CHEBI:46911"/>
    </ligand>
</feature>
<feature type="binding site" evidence="2">
    <location>
        <position position="236"/>
    </location>
    <ligand>
        <name>L-ornithine</name>
        <dbReference type="ChEBI" id="CHEBI:46911"/>
    </ligand>
</feature>
<feature type="binding site" evidence="2">
    <location>
        <begin position="240"/>
        <end position="241"/>
    </location>
    <ligand>
        <name>L-ornithine</name>
        <dbReference type="ChEBI" id="CHEBI:46911"/>
    </ligand>
</feature>
<feature type="binding site" evidence="2">
    <location>
        <begin position="278"/>
        <end position="279"/>
    </location>
    <ligand>
        <name>carbamoyl phosphate</name>
        <dbReference type="ChEBI" id="CHEBI:58228"/>
    </ligand>
</feature>
<feature type="binding site" evidence="2">
    <location>
        <position position="323"/>
    </location>
    <ligand>
        <name>carbamoyl phosphate</name>
        <dbReference type="ChEBI" id="CHEBI:58228"/>
    </ligand>
</feature>
<protein>
    <recommendedName>
        <fullName evidence="2">Ornithine carbamoyltransferase</fullName>
        <shortName evidence="2">OTCase</shortName>
        <ecNumber evidence="2">2.1.3.3</ecNumber>
    </recommendedName>
</protein>
<dbReference type="EC" id="2.1.3.3" evidence="2"/>
<dbReference type="EMBL" id="CP000416">
    <property type="protein sequence ID" value="ABJ65083.1"/>
    <property type="molecule type" value="Genomic_DNA"/>
</dbReference>
<dbReference type="SMR" id="Q03NY9"/>
<dbReference type="STRING" id="387344.LVIS_2026"/>
<dbReference type="KEGG" id="lbr:LVIS_2026"/>
<dbReference type="eggNOG" id="COG0078">
    <property type="taxonomic scope" value="Bacteria"/>
</dbReference>
<dbReference type="HOGENOM" id="CLU_043846_3_1_9"/>
<dbReference type="UniPathway" id="UPA00254">
    <property type="reaction ID" value="UER00365"/>
</dbReference>
<dbReference type="Proteomes" id="UP000001652">
    <property type="component" value="Chromosome"/>
</dbReference>
<dbReference type="GO" id="GO:0005737">
    <property type="term" value="C:cytoplasm"/>
    <property type="evidence" value="ECO:0007669"/>
    <property type="project" value="UniProtKB-SubCell"/>
</dbReference>
<dbReference type="GO" id="GO:0016597">
    <property type="term" value="F:amino acid binding"/>
    <property type="evidence" value="ECO:0007669"/>
    <property type="project" value="InterPro"/>
</dbReference>
<dbReference type="GO" id="GO:0004585">
    <property type="term" value="F:ornithine carbamoyltransferase activity"/>
    <property type="evidence" value="ECO:0007669"/>
    <property type="project" value="UniProtKB-UniRule"/>
</dbReference>
<dbReference type="GO" id="GO:0042450">
    <property type="term" value="P:arginine biosynthetic process via ornithine"/>
    <property type="evidence" value="ECO:0007669"/>
    <property type="project" value="TreeGrafter"/>
</dbReference>
<dbReference type="GO" id="GO:0019547">
    <property type="term" value="P:arginine catabolic process to ornithine"/>
    <property type="evidence" value="ECO:0007669"/>
    <property type="project" value="UniProtKB-UniRule"/>
</dbReference>
<dbReference type="GO" id="GO:0019240">
    <property type="term" value="P:citrulline biosynthetic process"/>
    <property type="evidence" value="ECO:0007669"/>
    <property type="project" value="TreeGrafter"/>
</dbReference>
<dbReference type="FunFam" id="3.40.50.1370:FF:000008">
    <property type="entry name" value="Ornithine carbamoyltransferase"/>
    <property type="match status" value="1"/>
</dbReference>
<dbReference type="Gene3D" id="3.40.50.1370">
    <property type="entry name" value="Aspartate/ornithine carbamoyltransferase"/>
    <property type="match status" value="2"/>
</dbReference>
<dbReference type="HAMAP" id="MF_01109">
    <property type="entry name" value="OTCase"/>
    <property type="match status" value="1"/>
</dbReference>
<dbReference type="InterPro" id="IPR006132">
    <property type="entry name" value="Asp/Orn_carbamoyltranf_P-bd"/>
</dbReference>
<dbReference type="InterPro" id="IPR006130">
    <property type="entry name" value="Asp/Orn_carbamoylTrfase"/>
</dbReference>
<dbReference type="InterPro" id="IPR036901">
    <property type="entry name" value="Asp/Orn_carbamoylTrfase_sf"/>
</dbReference>
<dbReference type="InterPro" id="IPR006131">
    <property type="entry name" value="Asp_carbamoyltransf_Asp/Orn-bd"/>
</dbReference>
<dbReference type="InterPro" id="IPR002292">
    <property type="entry name" value="Orn/put_carbamltrans"/>
</dbReference>
<dbReference type="InterPro" id="IPR024904">
    <property type="entry name" value="OTCase_ArgI"/>
</dbReference>
<dbReference type="NCBIfam" id="TIGR00658">
    <property type="entry name" value="orni_carb_tr"/>
    <property type="match status" value="1"/>
</dbReference>
<dbReference type="PANTHER" id="PTHR45753:SF1">
    <property type="entry name" value="ORNITHINE CARBAMOYLTRANSFERASE, CATABOLIC"/>
    <property type="match status" value="1"/>
</dbReference>
<dbReference type="PANTHER" id="PTHR45753">
    <property type="entry name" value="ORNITHINE CARBAMOYLTRANSFERASE, MITOCHONDRIAL"/>
    <property type="match status" value="1"/>
</dbReference>
<dbReference type="Pfam" id="PF00185">
    <property type="entry name" value="OTCace"/>
    <property type="match status" value="1"/>
</dbReference>
<dbReference type="Pfam" id="PF02729">
    <property type="entry name" value="OTCace_N"/>
    <property type="match status" value="1"/>
</dbReference>
<dbReference type="PRINTS" id="PR00100">
    <property type="entry name" value="AOTCASE"/>
</dbReference>
<dbReference type="PRINTS" id="PR00102">
    <property type="entry name" value="OTCASE"/>
</dbReference>
<dbReference type="SUPFAM" id="SSF53671">
    <property type="entry name" value="Aspartate/ornithine carbamoyltransferase"/>
    <property type="match status" value="1"/>
</dbReference>
<dbReference type="PROSITE" id="PS00097">
    <property type="entry name" value="CARBAMOYLTRANSFERASE"/>
    <property type="match status" value="1"/>
</dbReference>
<keyword id="KW-0056">Arginine metabolism</keyword>
<keyword id="KW-0963">Cytoplasm</keyword>
<keyword id="KW-1185">Reference proteome</keyword>
<keyword id="KW-0808">Transferase</keyword>
<accession>Q03NY9</accession>
<name>OTC_LEVBA</name>
<sequence>MTKDFRENVFQGRSVLAEKDFTAEELEYLIDFGLHLKTLKKNHIPHRYLEGKNIALLFEKSSTRTRSAFTTASIDLGAHPEYLGQNDIQLGKKESTSDTAKVLGSMFDGIEFRGFKQSDAEILARDSGVPVWNGLTDEWHPTQMLADFMTVKENFGKLKGLTLTFMGDGRNNVANSLLVTGAILGVNIHIVAPKELFPTKETQDLAKGFAEKSGAKLLVTDDLAEGMRGSNVVYTDVWVSMGESNWEERVNLLKPYQVNMEALKMTGTPDDELIFMHCLPAFHNVETQYGQDIKEKYGITEMEVTDEVFTSKYARQFEEAENRMHSIKAMMAATLGNLFIPRA</sequence>
<proteinExistence type="inferred from homology"/>
<organism>
    <name type="scientific">Levilactobacillus brevis (strain ATCC 367 / BCRC 12310 / CIP 105137 / JCM 1170 / LMG 11437 / NCIMB 947 / NCTC 947)</name>
    <name type="common">Lactobacillus brevis</name>
    <dbReference type="NCBI Taxonomy" id="387344"/>
    <lineage>
        <taxon>Bacteria</taxon>
        <taxon>Bacillati</taxon>
        <taxon>Bacillota</taxon>
        <taxon>Bacilli</taxon>
        <taxon>Lactobacillales</taxon>
        <taxon>Lactobacillaceae</taxon>
        <taxon>Levilactobacillus</taxon>
    </lineage>
</organism>
<comment type="function">
    <text evidence="1">Reversibly catalyzes the transfer of the carbamoyl group from carbamoyl phosphate (CP) to the N(epsilon) atom of ornithine (ORN) to produce L-citrulline.</text>
</comment>
<comment type="catalytic activity">
    <reaction evidence="2">
        <text>carbamoyl phosphate + L-ornithine = L-citrulline + phosphate + H(+)</text>
        <dbReference type="Rhea" id="RHEA:19513"/>
        <dbReference type="ChEBI" id="CHEBI:15378"/>
        <dbReference type="ChEBI" id="CHEBI:43474"/>
        <dbReference type="ChEBI" id="CHEBI:46911"/>
        <dbReference type="ChEBI" id="CHEBI:57743"/>
        <dbReference type="ChEBI" id="CHEBI:58228"/>
        <dbReference type="EC" id="2.1.3.3"/>
    </reaction>
</comment>
<comment type="pathway">
    <text evidence="2">Amino-acid degradation; L-arginine degradation via ADI pathway; carbamoyl phosphate from L-arginine: step 2/2.</text>
</comment>
<comment type="subcellular location">
    <subcellularLocation>
        <location evidence="2">Cytoplasm</location>
    </subcellularLocation>
</comment>
<comment type="similarity">
    <text evidence="2">Belongs to the aspartate/ornithine carbamoyltransferase superfamily. OTCase family.</text>
</comment>
<gene>
    <name evidence="2" type="primary">arcB</name>
    <name type="ordered locus">LVIS_2026</name>
</gene>